<keyword id="KW-0066">ATP synthesis</keyword>
<keyword id="KW-0997">Cell inner membrane</keyword>
<keyword id="KW-1003">Cell membrane</keyword>
<keyword id="KW-0138">CF(0)</keyword>
<keyword id="KW-0375">Hydrogen ion transport</keyword>
<keyword id="KW-0406">Ion transport</keyword>
<keyword id="KW-0472">Membrane</keyword>
<keyword id="KW-1185">Reference proteome</keyword>
<keyword id="KW-0812">Transmembrane</keyword>
<keyword id="KW-1133">Transmembrane helix</keyword>
<keyword id="KW-0813">Transport</keyword>
<comment type="function">
    <text evidence="1">Key component of the proton channel; it plays a direct role in the translocation of protons across the membrane.</text>
</comment>
<comment type="subunit">
    <text evidence="1">F-type ATPases have 2 components, CF(1) - the catalytic core - and CF(0) - the membrane proton channel. CF(1) has five subunits: alpha(3), beta(3), gamma(1), delta(1), epsilon(1). CF(0) has three main subunits: a(1), b(2) and c(9-12). The alpha and beta chains form an alternating ring which encloses part of the gamma chain. CF(1) is attached to CF(0) by a central stalk formed by the gamma and epsilon chains, while a peripheral stalk is formed by the delta and b chains.</text>
</comment>
<comment type="subcellular location">
    <subcellularLocation>
        <location evidence="1">Cell inner membrane</location>
        <topology evidence="1">Multi-pass membrane protein</topology>
    </subcellularLocation>
</comment>
<comment type="similarity">
    <text evidence="1">Belongs to the ATPase A chain family.</text>
</comment>
<evidence type="ECO:0000255" key="1">
    <source>
        <dbReference type="HAMAP-Rule" id="MF_01393"/>
    </source>
</evidence>
<name>ATP6_DESPS</name>
<feature type="chain" id="PRO_0000362283" description="ATP synthase subunit a">
    <location>
        <begin position="1"/>
        <end position="240"/>
    </location>
</feature>
<feature type="transmembrane region" description="Helical" evidence="1">
    <location>
        <begin position="41"/>
        <end position="61"/>
    </location>
</feature>
<feature type="transmembrane region" description="Helical" evidence="1">
    <location>
        <begin position="92"/>
        <end position="112"/>
    </location>
</feature>
<feature type="transmembrane region" description="Helical" evidence="1">
    <location>
        <begin position="121"/>
        <end position="141"/>
    </location>
</feature>
<feature type="transmembrane region" description="Helical" evidence="1">
    <location>
        <begin position="152"/>
        <end position="172"/>
    </location>
</feature>
<feature type="transmembrane region" description="Helical" evidence="1">
    <location>
        <begin position="191"/>
        <end position="211"/>
    </location>
</feature>
<feature type="transmembrane region" description="Helical" evidence="1">
    <location>
        <begin position="212"/>
        <end position="232"/>
    </location>
</feature>
<organism>
    <name type="scientific">Desulfotalea psychrophila (strain LSv54 / DSM 12343)</name>
    <dbReference type="NCBI Taxonomy" id="177439"/>
    <lineage>
        <taxon>Bacteria</taxon>
        <taxon>Pseudomonadati</taxon>
        <taxon>Thermodesulfobacteriota</taxon>
        <taxon>Desulfobulbia</taxon>
        <taxon>Desulfobulbales</taxon>
        <taxon>Desulfocapsaceae</taxon>
        <taxon>Desulfotalea</taxon>
    </lineage>
</organism>
<protein>
    <recommendedName>
        <fullName evidence="1">ATP synthase subunit a</fullName>
    </recommendedName>
    <alternativeName>
        <fullName evidence="1">ATP synthase F0 sector subunit a</fullName>
    </alternativeName>
    <alternativeName>
        <fullName evidence="1">F-ATPase subunit 6</fullName>
    </alternativeName>
</protein>
<accession>Q6AQ29</accession>
<gene>
    <name evidence="1" type="primary">atpB</name>
    <name type="ordered locus">DP0815</name>
</gene>
<proteinExistence type="inferred from homology"/>
<dbReference type="EMBL" id="CR522870">
    <property type="protein sequence ID" value="CAG35544.1"/>
    <property type="molecule type" value="Genomic_DNA"/>
</dbReference>
<dbReference type="RefSeq" id="WP_011188060.1">
    <property type="nucleotide sequence ID" value="NC_006138.1"/>
</dbReference>
<dbReference type="SMR" id="Q6AQ29"/>
<dbReference type="STRING" id="177439.DP0815"/>
<dbReference type="KEGG" id="dps:DP0815"/>
<dbReference type="eggNOG" id="COG0356">
    <property type="taxonomic scope" value="Bacteria"/>
</dbReference>
<dbReference type="HOGENOM" id="CLU_041018_2_2_7"/>
<dbReference type="OrthoDB" id="9789241at2"/>
<dbReference type="Proteomes" id="UP000000602">
    <property type="component" value="Chromosome"/>
</dbReference>
<dbReference type="GO" id="GO:0005886">
    <property type="term" value="C:plasma membrane"/>
    <property type="evidence" value="ECO:0007669"/>
    <property type="project" value="UniProtKB-SubCell"/>
</dbReference>
<dbReference type="GO" id="GO:0045259">
    <property type="term" value="C:proton-transporting ATP synthase complex"/>
    <property type="evidence" value="ECO:0007669"/>
    <property type="project" value="UniProtKB-KW"/>
</dbReference>
<dbReference type="GO" id="GO:0046933">
    <property type="term" value="F:proton-transporting ATP synthase activity, rotational mechanism"/>
    <property type="evidence" value="ECO:0007669"/>
    <property type="project" value="UniProtKB-UniRule"/>
</dbReference>
<dbReference type="GO" id="GO:0042777">
    <property type="term" value="P:proton motive force-driven plasma membrane ATP synthesis"/>
    <property type="evidence" value="ECO:0007669"/>
    <property type="project" value="TreeGrafter"/>
</dbReference>
<dbReference type="CDD" id="cd00310">
    <property type="entry name" value="ATP-synt_Fo_a_6"/>
    <property type="match status" value="1"/>
</dbReference>
<dbReference type="Gene3D" id="1.20.120.220">
    <property type="entry name" value="ATP synthase, F0 complex, subunit A"/>
    <property type="match status" value="1"/>
</dbReference>
<dbReference type="HAMAP" id="MF_01393">
    <property type="entry name" value="ATP_synth_a_bact"/>
    <property type="match status" value="1"/>
</dbReference>
<dbReference type="InterPro" id="IPR045082">
    <property type="entry name" value="ATP_syn_F0_a_bact/chloroplast"/>
</dbReference>
<dbReference type="InterPro" id="IPR000568">
    <property type="entry name" value="ATP_synth_F0_asu"/>
</dbReference>
<dbReference type="InterPro" id="IPR023011">
    <property type="entry name" value="ATP_synth_F0_asu_AS"/>
</dbReference>
<dbReference type="InterPro" id="IPR035908">
    <property type="entry name" value="F0_ATP_A_sf"/>
</dbReference>
<dbReference type="NCBIfam" id="TIGR01131">
    <property type="entry name" value="ATP_synt_6_or_A"/>
    <property type="match status" value="1"/>
</dbReference>
<dbReference type="PANTHER" id="PTHR42823">
    <property type="entry name" value="ATP SYNTHASE SUBUNIT A, CHLOROPLASTIC"/>
    <property type="match status" value="1"/>
</dbReference>
<dbReference type="PANTHER" id="PTHR42823:SF3">
    <property type="entry name" value="ATP SYNTHASE SUBUNIT A, CHLOROPLASTIC"/>
    <property type="match status" value="1"/>
</dbReference>
<dbReference type="Pfam" id="PF00119">
    <property type="entry name" value="ATP-synt_A"/>
    <property type="match status" value="1"/>
</dbReference>
<dbReference type="PRINTS" id="PR00123">
    <property type="entry name" value="ATPASEA"/>
</dbReference>
<dbReference type="SUPFAM" id="SSF81336">
    <property type="entry name" value="F1F0 ATP synthase subunit A"/>
    <property type="match status" value="1"/>
</dbReference>
<dbReference type="PROSITE" id="PS00449">
    <property type="entry name" value="ATPASE_A"/>
    <property type="match status" value="1"/>
</dbReference>
<sequence length="240" mass="26798">MEHPILFISIILEKLGLPVPHGPVGQTFLEKMCEPYMTYTWLVMAFLFLVSKFTLGNLEIIPGKGQNFWEMIIGGMDDFFADNMGREMADKFFPMIATFALYIAVANLIGLIPGFMSPTASINTTLALTLIVWATHHVIGFKEHGLGYYKHFIGPMKWLVPLMLPIELISNFARLLSLSIRLFGNIMAKEVLLGILFGLAGMFFAPLPIMVLGVLVSLVQAMVFVLLTVVYFAQAQEHAH</sequence>
<reference key="1">
    <citation type="journal article" date="2004" name="Environ. Microbiol.">
        <title>The genome of Desulfotalea psychrophila, a sulfate-reducing bacterium from permanently cold Arctic sediments.</title>
        <authorList>
            <person name="Rabus R."/>
            <person name="Ruepp A."/>
            <person name="Frickey T."/>
            <person name="Rattei T."/>
            <person name="Fartmann B."/>
            <person name="Stark M."/>
            <person name="Bauer M."/>
            <person name="Zibat A."/>
            <person name="Lombardot T."/>
            <person name="Becker I."/>
            <person name="Amann J."/>
            <person name="Gellner K."/>
            <person name="Teeling H."/>
            <person name="Leuschner W.D."/>
            <person name="Gloeckner F.-O."/>
            <person name="Lupas A.N."/>
            <person name="Amann R."/>
            <person name="Klenk H.-P."/>
        </authorList>
    </citation>
    <scope>NUCLEOTIDE SEQUENCE [LARGE SCALE GENOMIC DNA]</scope>
    <source>
        <strain>DSM 12343 / LSv54</strain>
    </source>
</reference>